<dbReference type="EMBL" id="CP000738">
    <property type="protein sequence ID" value="ABR59673.1"/>
    <property type="molecule type" value="Genomic_DNA"/>
</dbReference>
<dbReference type="RefSeq" id="WP_003529310.1">
    <property type="nucleotide sequence ID" value="NC_009636.1"/>
</dbReference>
<dbReference type="RefSeq" id="YP_001326508.1">
    <property type="nucleotide sequence ID" value="NC_009636.1"/>
</dbReference>
<dbReference type="SMR" id="A6U7P3"/>
<dbReference type="STRING" id="366394.Smed_0817"/>
<dbReference type="GeneID" id="89575532"/>
<dbReference type="KEGG" id="smd:Smed_0817"/>
<dbReference type="PATRIC" id="fig|366394.8.peg.3931"/>
<dbReference type="eggNOG" id="COG1327">
    <property type="taxonomic scope" value="Bacteria"/>
</dbReference>
<dbReference type="HOGENOM" id="CLU_108412_0_1_5"/>
<dbReference type="OrthoDB" id="9807461at2"/>
<dbReference type="PRO" id="PR:A6U7P3"/>
<dbReference type="Proteomes" id="UP000001108">
    <property type="component" value="Chromosome"/>
</dbReference>
<dbReference type="GO" id="GO:0005524">
    <property type="term" value="F:ATP binding"/>
    <property type="evidence" value="ECO:0007669"/>
    <property type="project" value="UniProtKB-KW"/>
</dbReference>
<dbReference type="GO" id="GO:0003677">
    <property type="term" value="F:DNA binding"/>
    <property type="evidence" value="ECO:0007669"/>
    <property type="project" value="UniProtKB-KW"/>
</dbReference>
<dbReference type="GO" id="GO:0008270">
    <property type="term" value="F:zinc ion binding"/>
    <property type="evidence" value="ECO:0007669"/>
    <property type="project" value="UniProtKB-UniRule"/>
</dbReference>
<dbReference type="GO" id="GO:0045892">
    <property type="term" value="P:negative regulation of DNA-templated transcription"/>
    <property type="evidence" value="ECO:0007669"/>
    <property type="project" value="UniProtKB-UniRule"/>
</dbReference>
<dbReference type="HAMAP" id="MF_00440">
    <property type="entry name" value="NrdR"/>
    <property type="match status" value="1"/>
</dbReference>
<dbReference type="InterPro" id="IPR005144">
    <property type="entry name" value="ATP-cone_dom"/>
</dbReference>
<dbReference type="InterPro" id="IPR055173">
    <property type="entry name" value="NrdR-like_N"/>
</dbReference>
<dbReference type="InterPro" id="IPR003796">
    <property type="entry name" value="RNR_NrdR-like"/>
</dbReference>
<dbReference type="NCBIfam" id="TIGR00244">
    <property type="entry name" value="transcriptional regulator NrdR"/>
    <property type="match status" value="1"/>
</dbReference>
<dbReference type="PANTHER" id="PTHR30455">
    <property type="entry name" value="TRANSCRIPTIONAL REPRESSOR NRDR"/>
    <property type="match status" value="1"/>
</dbReference>
<dbReference type="PANTHER" id="PTHR30455:SF2">
    <property type="entry name" value="TRANSCRIPTIONAL REPRESSOR NRDR"/>
    <property type="match status" value="1"/>
</dbReference>
<dbReference type="Pfam" id="PF03477">
    <property type="entry name" value="ATP-cone"/>
    <property type="match status" value="1"/>
</dbReference>
<dbReference type="Pfam" id="PF22811">
    <property type="entry name" value="Zn_ribbon_NrdR"/>
    <property type="match status" value="1"/>
</dbReference>
<dbReference type="PROSITE" id="PS51161">
    <property type="entry name" value="ATP_CONE"/>
    <property type="match status" value="1"/>
</dbReference>
<comment type="function">
    <text evidence="1">Negatively regulates transcription of bacterial ribonucleotide reductase nrd genes and operons by binding to NrdR-boxes.</text>
</comment>
<comment type="cofactor">
    <cofactor evidence="1">
        <name>Zn(2+)</name>
        <dbReference type="ChEBI" id="CHEBI:29105"/>
    </cofactor>
    <text evidence="1">Binds 1 zinc ion.</text>
</comment>
<comment type="similarity">
    <text evidence="1">Belongs to the NrdR family.</text>
</comment>
<keyword id="KW-0067">ATP-binding</keyword>
<keyword id="KW-0238">DNA-binding</keyword>
<keyword id="KW-0479">Metal-binding</keyword>
<keyword id="KW-0547">Nucleotide-binding</keyword>
<keyword id="KW-0678">Repressor</keyword>
<keyword id="KW-0804">Transcription</keyword>
<keyword id="KW-0805">Transcription regulation</keyword>
<keyword id="KW-0862">Zinc</keyword>
<keyword id="KW-0863">Zinc-finger</keyword>
<sequence>MRCPYCGSEDSQVKDSRPAEDGNAIRRRRICPDCGGRFTTFERVQLRELMIIKKTGRKVPFDRDKLLRSFEIALRKRPVDRDRIERAVSGIVRRLESSGETEIPSEEIGLQVLEALKSLDDVAFVRYASVYRDFSHAEDFEKVIAEISAKIARDPGE</sequence>
<organism>
    <name type="scientific">Sinorhizobium medicae (strain WSM419)</name>
    <name type="common">Ensifer medicae</name>
    <dbReference type="NCBI Taxonomy" id="366394"/>
    <lineage>
        <taxon>Bacteria</taxon>
        <taxon>Pseudomonadati</taxon>
        <taxon>Pseudomonadota</taxon>
        <taxon>Alphaproteobacteria</taxon>
        <taxon>Hyphomicrobiales</taxon>
        <taxon>Rhizobiaceae</taxon>
        <taxon>Sinorhizobium/Ensifer group</taxon>
        <taxon>Sinorhizobium</taxon>
    </lineage>
</organism>
<accession>A6U7P3</accession>
<reference key="1">
    <citation type="submission" date="2007-06" db="EMBL/GenBank/DDBJ databases">
        <title>Complete sequence of Sinorhizobium medicae WSM419 chromosome.</title>
        <authorList>
            <consortium name="US DOE Joint Genome Institute"/>
            <person name="Copeland A."/>
            <person name="Lucas S."/>
            <person name="Lapidus A."/>
            <person name="Barry K."/>
            <person name="Glavina del Rio T."/>
            <person name="Dalin E."/>
            <person name="Tice H."/>
            <person name="Pitluck S."/>
            <person name="Chain P."/>
            <person name="Malfatti S."/>
            <person name="Shin M."/>
            <person name="Vergez L."/>
            <person name="Schmutz J."/>
            <person name="Larimer F."/>
            <person name="Land M."/>
            <person name="Hauser L."/>
            <person name="Kyrpides N."/>
            <person name="Mikhailova N."/>
            <person name="Reeve W.G."/>
            <person name="Richardson P."/>
        </authorList>
    </citation>
    <scope>NUCLEOTIDE SEQUENCE [LARGE SCALE GENOMIC DNA]</scope>
    <source>
        <strain>WSM419</strain>
    </source>
</reference>
<feature type="chain" id="PRO_1000080833" description="Transcriptional repressor NrdR">
    <location>
        <begin position="1"/>
        <end position="157"/>
    </location>
</feature>
<feature type="domain" description="ATP-cone" evidence="1">
    <location>
        <begin position="49"/>
        <end position="139"/>
    </location>
</feature>
<feature type="zinc finger region" evidence="1">
    <location>
        <begin position="3"/>
        <end position="34"/>
    </location>
</feature>
<feature type="region of interest" description="Disordered" evidence="2">
    <location>
        <begin position="1"/>
        <end position="21"/>
    </location>
</feature>
<feature type="compositionally biased region" description="Basic and acidic residues" evidence="2">
    <location>
        <begin position="11"/>
        <end position="21"/>
    </location>
</feature>
<gene>
    <name evidence="1" type="primary">nrdR</name>
    <name type="ordered locus">Smed_0817</name>
</gene>
<protein>
    <recommendedName>
        <fullName evidence="1">Transcriptional repressor NrdR</fullName>
    </recommendedName>
</protein>
<evidence type="ECO:0000255" key="1">
    <source>
        <dbReference type="HAMAP-Rule" id="MF_00440"/>
    </source>
</evidence>
<evidence type="ECO:0000256" key="2">
    <source>
        <dbReference type="SAM" id="MobiDB-lite"/>
    </source>
</evidence>
<proteinExistence type="inferred from homology"/>
<name>NRDR_SINMW</name>